<dbReference type="EMBL" id="CU468135">
    <property type="protein sequence ID" value="CAO98191.1"/>
    <property type="molecule type" value="Genomic_DNA"/>
</dbReference>
<dbReference type="RefSeq" id="WP_004160569.1">
    <property type="nucleotide sequence ID" value="NC_010694.1"/>
</dbReference>
<dbReference type="SMR" id="B2VK78"/>
<dbReference type="STRING" id="465817.ETA_31450"/>
<dbReference type="GeneID" id="97604582"/>
<dbReference type="KEGG" id="eta:ETA_31450"/>
<dbReference type="eggNOG" id="COG1841">
    <property type="taxonomic scope" value="Bacteria"/>
</dbReference>
<dbReference type="HOGENOM" id="CLU_131047_1_4_6"/>
<dbReference type="OrthoDB" id="9812790at2"/>
<dbReference type="Proteomes" id="UP000001726">
    <property type="component" value="Chromosome"/>
</dbReference>
<dbReference type="GO" id="GO:0022625">
    <property type="term" value="C:cytosolic large ribosomal subunit"/>
    <property type="evidence" value="ECO:0007669"/>
    <property type="project" value="TreeGrafter"/>
</dbReference>
<dbReference type="GO" id="GO:0003735">
    <property type="term" value="F:structural constituent of ribosome"/>
    <property type="evidence" value="ECO:0007669"/>
    <property type="project" value="InterPro"/>
</dbReference>
<dbReference type="GO" id="GO:0006412">
    <property type="term" value="P:translation"/>
    <property type="evidence" value="ECO:0007669"/>
    <property type="project" value="UniProtKB-UniRule"/>
</dbReference>
<dbReference type="CDD" id="cd01658">
    <property type="entry name" value="Ribosomal_L30"/>
    <property type="match status" value="1"/>
</dbReference>
<dbReference type="FunFam" id="3.30.1390.20:FF:000001">
    <property type="entry name" value="50S ribosomal protein L30"/>
    <property type="match status" value="1"/>
</dbReference>
<dbReference type="Gene3D" id="3.30.1390.20">
    <property type="entry name" value="Ribosomal protein L30, ferredoxin-like fold domain"/>
    <property type="match status" value="1"/>
</dbReference>
<dbReference type="HAMAP" id="MF_01371_B">
    <property type="entry name" value="Ribosomal_uL30_B"/>
    <property type="match status" value="1"/>
</dbReference>
<dbReference type="InterPro" id="IPR036919">
    <property type="entry name" value="Ribo_uL30_ferredoxin-like_sf"/>
</dbReference>
<dbReference type="InterPro" id="IPR005996">
    <property type="entry name" value="Ribosomal_uL30_bac-type"/>
</dbReference>
<dbReference type="InterPro" id="IPR018038">
    <property type="entry name" value="Ribosomal_uL30_CS"/>
</dbReference>
<dbReference type="InterPro" id="IPR016082">
    <property type="entry name" value="Ribosomal_uL30_ferredoxin-like"/>
</dbReference>
<dbReference type="NCBIfam" id="TIGR01308">
    <property type="entry name" value="rpmD_bact"/>
    <property type="match status" value="1"/>
</dbReference>
<dbReference type="PANTHER" id="PTHR15892:SF2">
    <property type="entry name" value="LARGE RIBOSOMAL SUBUNIT PROTEIN UL30M"/>
    <property type="match status" value="1"/>
</dbReference>
<dbReference type="PANTHER" id="PTHR15892">
    <property type="entry name" value="MITOCHONDRIAL RIBOSOMAL PROTEIN L30"/>
    <property type="match status" value="1"/>
</dbReference>
<dbReference type="Pfam" id="PF00327">
    <property type="entry name" value="Ribosomal_L30"/>
    <property type="match status" value="1"/>
</dbReference>
<dbReference type="PIRSF" id="PIRSF002211">
    <property type="entry name" value="Ribosomal_L30_bac-type"/>
    <property type="match status" value="1"/>
</dbReference>
<dbReference type="SUPFAM" id="SSF55129">
    <property type="entry name" value="Ribosomal protein L30p/L7e"/>
    <property type="match status" value="1"/>
</dbReference>
<dbReference type="PROSITE" id="PS00634">
    <property type="entry name" value="RIBOSOMAL_L30"/>
    <property type="match status" value="1"/>
</dbReference>
<organism>
    <name type="scientific">Erwinia tasmaniensis (strain DSM 17950 / CFBP 7177 / CIP 109463 / NCPPB 4357 / Et1/99)</name>
    <dbReference type="NCBI Taxonomy" id="465817"/>
    <lineage>
        <taxon>Bacteria</taxon>
        <taxon>Pseudomonadati</taxon>
        <taxon>Pseudomonadota</taxon>
        <taxon>Gammaproteobacteria</taxon>
        <taxon>Enterobacterales</taxon>
        <taxon>Erwiniaceae</taxon>
        <taxon>Erwinia</taxon>
    </lineage>
</organism>
<sequence>MAKTIKITQTRSSIGRLPKHKATLLGLGLRRINHTVEREDTPAVRGMVNAISYMVKVEE</sequence>
<proteinExistence type="inferred from homology"/>
<reference key="1">
    <citation type="journal article" date="2008" name="Environ. Microbiol.">
        <title>The genome of Erwinia tasmaniensis strain Et1/99, a non-pathogenic bacterium in the genus Erwinia.</title>
        <authorList>
            <person name="Kube M."/>
            <person name="Migdoll A.M."/>
            <person name="Mueller I."/>
            <person name="Kuhl H."/>
            <person name="Beck A."/>
            <person name="Reinhardt R."/>
            <person name="Geider K."/>
        </authorList>
    </citation>
    <scope>NUCLEOTIDE SEQUENCE [LARGE SCALE GENOMIC DNA]</scope>
    <source>
        <strain>DSM 17950 / CFBP 7177 / CIP 109463 / NCPPB 4357 / Et1/99</strain>
    </source>
</reference>
<accession>B2VK78</accession>
<comment type="subunit">
    <text evidence="1">Part of the 50S ribosomal subunit.</text>
</comment>
<comment type="similarity">
    <text evidence="1">Belongs to the universal ribosomal protein uL30 family.</text>
</comment>
<gene>
    <name evidence="1" type="primary">rpmD</name>
    <name type="ordered locus">ETA_31450</name>
</gene>
<name>RL30_ERWT9</name>
<keyword id="KW-1185">Reference proteome</keyword>
<keyword id="KW-0687">Ribonucleoprotein</keyword>
<keyword id="KW-0689">Ribosomal protein</keyword>
<evidence type="ECO:0000255" key="1">
    <source>
        <dbReference type="HAMAP-Rule" id="MF_01371"/>
    </source>
</evidence>
<evidence type="ECO:0000305" key="2"/>
<feature type="chain" id="PRO_1000144683" description="Large ribosomal subunit protein uL30">
    <location>
        <begin position="1"/>
        <end position="59"/>
    </location>
</feature>
<protein>
    <recommendedName>
        <fullName evidence="1">Large ribosomal subunit protein uL30</fullName>
    </recommendedName>
    <alternativeName>
        <fullName evidence="2">50S ribosomal protein L30</fullName>
    </alternativeName>
</protein>